<accession>Q2XPU7</accession>
<name>LUPS_RICCO</name>
<keyword id="KW-0413">Isomerase</keyword>
<keyword id="KW-0677">Repeat</keyword>
<reference key="1">
    <citation type="journal article" date="2006" name="Arch. Biochem. Biophys.">
        <title>Cloning and characterization of a lupeol synthase involved in the synthesis of epicuticular wax crystals on stem and hypocotyl surfaces of Ricinus communis.</title>
        <authorList>
            <person name="Guhling O."/>
            <person name="Hobl B."/>
            <person name="Yeats T."/>
            <person name="Jetter R."/>
        </authorList>
    </citation>
    <scope>NUCLEOTIDE SEQUENCE [MRNA]</scope>
    <scope>FUNCTION</scope>
    <scope>CATALYTIC ACTIVITY</scope>
    <scope>DEVELOPMENTAL STAGE</scope>
    <scope>TISSUE SPECIFICITY</scope>
</reference>
<proteinExistence type="evidence at protein level"/>
<dbReference type="EC" id="5.4.99.41"/>
<dbReference type="EMBL" id="DQ268869">
    <property type="protein sequence ID" value="ABB76766.1"/>
    <property type="molecule type" value="mRNA"/>
</dbReference>
<dbReference type="RefSeq" id="NP_001310684.1">
    <property type="nucleotide sequence ID" value="NM_001323755.1"/>
</dbReference>
<dbReference type="SMR" id="Q2XPU7"/>
<dbReference type="GeneID" id="8280320"/>
<dbReference type="KEGG" id="ag:ABB76766"/>
<dbReference type="KEGG" id="rcu:8280320"/>
<dbReference type="eggNOG" id="KOG0497">
    <property type="taxonomic scope" value="Eukaryota"/>
</dbReference>
<dbReference type="OMA" id="WCAENGG"/>
<dbReference type="OrthoDB" id="21502at2759"/>
<dbReference type="BRENDA" id="5.4.99.41">
    <property type="organism ID" value="1204"/>
</dbReference>
<dbReference type="GO" id="GO:0005811">
    <property type="term" value="C:lipid droplet"/>
    <property type="evidence" value="ECO:0007669"/>
    <property type="project" value="InterPro"/>
</dbReference>
<dbReference type="GO" id="GO:0042299">
    <property type="term" value="F:lupeol synthase activity"/>
    <property type="evidence" value="ECO:0000314"/>
    <property type="project" value="UniProtKB"/>
</dbReference>
<dbReference type="GO" id="GO:0042335">
    <property type="term" value="P:cuticle development"/>
    <property type="evidence" value="ECO:0000314"/>
    <property type="project" value="UniProtKB"/>
</dbReference>
<dbReference type="GO" id="GO:0019745">
    <property type="term" value="P:pentacyclic triterpenoid biosynthetic process"/>
    <property type="evidence" value="ECO:0000314"/>
    <property type="project" value="UniProtKB"/>
</dbReference>
<dbReference type="CDD" id="cd02892">
    <property type="entry name" value="SQCY_1"/>
    <property type="match status" value="1"/>
</dbReference>
<dbReference type="FunFam" id="1.50.10.20:FF:000044">
    <property type="entry name" value="Lupeol synthase"/>
    <property type="match status" value="1"/>
</dbReference>
<dbReference type="FunFam" id="1.50.10.20:FF:000011">
    <property type="entry name" value="Terpene cyclase/mutase family member"/>
    <property type="match status" value="1"/>
</dbReference>
<dbReference type="Gene3D" id="1.50.10.20">
    <property type="match status" value="2"/>
</dbReference>
<dbReference type="InterPro" id="IPR032696">
    <property type="entry name" value="SQ_cyclase_C"/>
</dbReference>
<dbReference type="InterPro" id="IPR032697">
    <property type="entry name" value="SQ_cyclase_N"/>
</dbReference>
<dbReference type="InterPro" id="IPR018333">
    <property type="entry name" value="Squalene_cyclase"/>
</dbReference>
<dbReference type="InterPro" id="IPR002365">
    <property type="entry name" value="Terpene_synthase_CS"/>
</dbReference>
<dbReference type="InterPro" id="IPR008930">
    <property type="entry name" value="Terpenoid_cyclase/PrenylTrfase"/>
</dbReference>
<dbReference type="NCBIfam" id="TIGR01787">
    <property type="entry name" value="squalene_cyclas"/>
    <property type="match status" value="1"/>
</dbReference>
<dbReference type="PANTHER" id="PTHR11764">
    <property type="entry name" value="TERPENE CYCLASE/MUTASE FAMILY MEMBER"/>
    <property type="match status" value="1"/>
</dbReference>
<dbReference type="PANTHER" id="PTHR11764:SF48">
    <property type="entry name" value="TERPENE CYCLASE_MUTASE FAMILY MEMBER"/>
    <property type="match status" value="1"/>
</dbReference>
<dbReference type="Pfam" id="PF13243">
    <property type="entry name" value="SQHop_cyclase_C"/>
    <property type="match status" value="1"/>
</dbReference>
<dbReference type="Pfam" id="PF13249">
    <property type="entry name" value="SQHop_cyclase_N"/>
    <property type="match status" value="1"/>
</dbReference>
<dbReference type="SFLD" id="SFLDG01016">
    <property type="entry name" value="Prenyltransferase_Like_2"/>
    <property type="match status" value="1"/>
</dbReference>
<dbReference type="SUPFAM" id="SSF48239">
    <property type="entry name" value="Terpenoid cyclases/Protein prenyltransferases"/>
    <property type="match status" value="2"/>
</dbReference>
<dbReference type="PROSITE" id="PS01074">
    <property type="entry name" value="TERPENE_SYNTHASES"/>
    <property type="match status" value="1"/>
</dbReference>
<sequence>MWRIKIAEGGNNPYIYSTNNFQGRQIWVFDPNAGTPEEQAEVEEARQNFWKNRFQVKPNSDLLWQLQFLREKNFKQKIPKVKVEDGEEITSEIAAAALRRSVHLFSALQASDGHWCAENGGLLFFLPPLVFAVYITGHLNTVFSPEHRKEILRYIYCHQNEDGGWGIHIEGHSTMFCTVLNYICMRILGEARDGGIENACERGRKWILDHGGATGISSWGKTWLSILGVYEWDGTNPMPPEFWAFPSSFPLHPAKMFCYCRITYMPMSYLYGKRFVGPITPLILQIREEIYNEPYNKIKWNSVRHLCAKEDNYFPHPTIQKLLWDALYTFSEPLFSRWPFNKLREKALKITMDHIHYEDHNSRYITIGCVEKPLCMLACWIEDPHGEAFKKHLARIADYIWVGEDGIKMQSFGSQTWDTSLALQALIASDLSHEIGPTLKQGHVFTKNSQATENPSGDFRKMFRHISKGAWTFSDKDQGWQVSDCTAESLKCCLLFSMMPPEIVGEKMEPEKVYDSVNVILSLQSQNGGFTAWEPARAGSWMEWLNPVEFMEDLVVEHEYVECTSSAIQALVLFKKLYPRHRNKEIENCIINAAQFIENIQEPDGSWYGNWGICFSYGTWFALKGLAAAGRTYENCSAIRKGVDFLLKSQRDDGGWAESYLSCPKKVYVPFEGNRSNLVQTAWAMMGLIYGGQAKRDPMPLHRAAKLLINSQTDLGDFPQQELTGAFMRNCMLHYALFRNTFPIWALAEYRRHVLFPSAGFGFGFTNNL</sequence>
<organism>
    <name type="scientific">Ricinus communis</name>
    <name type="common">Castor bean</name>
    <dbReference type="NCBI Taxonomy" id="3988"/>
    <lineage>
        <taxon>Eukaryota</taxon>
        <taxon>Viridiplantae</taxon>
        <taxon>Streptophyta</taxon>
        <taxon>Embryophyta</taxon>
        <taxon>Tracheophyta</taxon>
        <taxon>Spermatophyta</taxon>
        <taxon>Magnoliopsida</taxon>
        <taxon>eudicotyledons</taxon>
        <taxon>Gunneridae</taxon>
        <taxon>Pentapetalae</taxon>
        <taxon>rosids</taxon>
        <taxon>fabids</taxon>
        <taxon>Malpighiales</taxon>
        <taxon>Euphorbiaceae</taxon>
        <taxon>Acalyphoideae</taxon>
        <taxon>Acalypheae</taxon>
        <taxon>Ricinus</taxon>
    </lineage>
</organism>
<protein>
    <recommendedName>
        <fullName>Lupeol synthase</fullName>
        <ecNumber>5.4.99.41</ecNumber>
    </recommendedName>
</protein>
<feature type="chain" id="PRO_0000413996" description="Lupeol synthase">
    <location>
        <begin position="1"/>
        <end position="769"/>
    </location>
</feature>
<feature type="repeat" description="PFTB 1">
    <location>
        <begin position="148"/>
        <end position="189"/>
    </location>
</feature>
<feature type="repeat" description="PFTB 2">
    <location>
        <begin position="513"/>
        <end position="558"/>
    </location>
</feature>
<feature type="repeat" description="PFTB 3">
    <location>
        <begin position="590"/>
        <end position="630"/>
    </location>
</feature>
<feature type="repeat" description="PFTB 4">
    <location>
        <begin position="639"/>
        <end position="680"/>
    </location>
</feature>
<feature type="active site" description="Proton donor" evidence="1">
    <location>
        <position position="484"/>
    </location>
</feature>
<comment type="function">
    <text evidence="2">Oxidosqualene cyclase involved in the biosynthesis of the cuticular lupeol of glaucous individuals, but not of the glossy phenotype.</text>
</comment>
<comment type="catalytic activity">
    <reaction evidence="2">
        <text>(S)-2,3-epoxysqualene = lupeol</text>
        <dbReference type="Rhea" id="RHEA:31383"/>
        <dbReference type="ChEBI" id="CHEBI:6570"/>
        <dbReference type="ChEBI" id="CHEBI:15441"/>
        <dbReference type="EC" id="5.4.99.41"/>
    </reaction>
</comment>
<comment type="tissue specificity">
    <text evidence="2">Expressed in stems and laves of glaucous individuals. Not expressed neither in stems or leaves of the glossy phenotype, nor in roots of both phenotypes.</text>
</comment>
<comment type="developmental stage">
    <text evidence="2">Expressed between 6 and 50 days after emergence, with a peak at day 12.</text>
</comment>
<comment type="miscellaneous">
    <text evidence="4">Lupeol forms probably the thread-shaped epicuticular wax crystals that hamper insect adhesion and can prevent herbivores from climbing vertical plant structures, a phenomenon known as the 'greasy pole syndrome'.</text>
</comment>
<comment type="similarity">
    <text evidence="3">Belongs to the terpene cyclase/mutase family.</text>
</comment>
<comment type="online information" name="Protein Spotlight">
    <link uri="https://www.proteinspotlight.org/back_issues/135"/>
    <text>Get a grip - Issue 135 of January 2012</text>
</comment>
<evidence type="ECO:0000250" key="1">
    <source>
        <dbReference type="UniProtKB" id="P48449"/>
    </source>
</evidence>
<evidence type="ECO:0000269" key="2">
    <source>
    </source>
</evidence>
<evidence type="ECO:0000305" key="3"/>
<evidence type="ECO:0000305" key="4">
    <source>
    </source>
</evidence>